<protein>
    <recommendedName>
        <fullName evidence="1">Divalent metal cation transporter MntH</fullName>
    </recommendedName>
</protein>
<comment type="function">
    <text evidence="1">H(+)-stimulated, divalent metal cation uptake system.</text>
</comment>
<comment type="subcellular location">
    <subcellularLocation>
        <location evidence="1">Cell inner membrane</location>
        <topology evidence="1">Multi-pass membrane protein</topology>
    </subcellularLocation>
</comment>
<comment type="similarity">
    <text evidence="1">Belongs to the NRAMP family.</text>
</comment>
<proteinExistence type="inferred from homology"/>
<name>MNTH_SHIBS</name>
<feature type="chain" id="PRO_1000024108" description="Divalent metal cation transporter MntH">
    <location>
        <begin position="1"/>
        <end position="412"/>
    </location>
</feature>
<feature type="topological domain" description="Cytoplasmic" evidence="1">
    <location>
        <begin position="1"/>
        <end position="19"/>
    </location>
</feature>
<feature type="transmembrane region" description="Helical" evidence="1">
    <location>
        <begin position="20"/>
        <end position="39"/>
    </location>
</feature>
<feature type="topological domain" description="Periplasmic" evidence="1">
    <location>
        <begin position="40"/>
        <end position="51"/>
    </location>
</feature>
<feature type="transmembrane region" description="Helical" evidence="1">
    <location>
        <begin position="52"/>
        <end position="71"/>
    </location>
</feature>
<feature type="topological domain" description="Cytoplasmic" evidence="1">
    <location>
        <begin position="72"/>
        <end position="95"/>
    </location>
</feature>
<feature type="transmembrane region" description="Helical" evidence="1">
    <location>
        <begin position="96"/>
        <end position="118"/>
    </location>
</feature>
<feature type="topological domain" description="Periplasmic" evidence="1">
    <location>
        <begin position="119"/>
        <end position="125"/>
    </location>
</feature>
<feature type="transmembrane region" description="Helical" evidence="1">
    <location>
        <begin position="126"/>
        <end position="145"/>
    </location>
</feature>
<feature type="topological domain" description="Cytoplasmic" evidence="1">
    <location>
        <begin position="146"/>
        <end position="155"/>
    </location>
</feature>
<feature type="transmembrane region" description="Helical" evidence="1">
    <location>
        <begin position="156"/>
        <end position="175"/>
    </location>
</feature>
<feature type="topological domain" description="Periplasmic" evidence="1">
    <location>
        <begin position="176"/>
        <end position="196"/>
    </location>
</feature>
<feature type="transmembrane region" description="Helical" evidence="1">
    <location>
        <begin position="197"/>
        <end position="220"/>
    </location>
</feature>
<feature type="topological domain" description="Cytoplasmic" evidence="1">
    <location>
        <begin position="221"/>
        <end position="238"/>
    </location>
</feature>
<feature type="transmembrane region" description="Helical" evidence="1">
    <location>
        <begin position="239"/>
        <end position="258"/>
    </location>
</feature>
<feature type="topological domain" description="Periplasmic" evidence="1">
    <location>
        <begin position="259"/>
        <end position="276"/>
    </location>
</feature>
<feature type="transmembrane region" description="Helical" evidence="1">
    <location>
        <begin position="277"/>
        <end position="297"/>
    </location>
</feature>
<feature type="topological domain" description="Cytoplasmic" evidence="1">
    <location>
        <begin position="298"/>
        <end position="327"/>
    </location>
</feature>
<feature type="transmembrane region" description="Helical" evidence="1">
    <location>
        <begin position="328"/>
        <end position="344"/>
    </location>
</feature>
<feature type="topological domain" description="Periplasmic" evidence="1">
    <location>
        <begin position="345"/>
        <end position="350"/>
    </location>
</feature>
<feature type="transmembrane region" description="Helical" evidence="1">
    <location>
        <begin position="351"/>
        <end position="370"/>
    </location>
</feature>
<feature type="topological domain" description="Cytoplasmic" evidence="1">
    <location>
        <begin position="371"/>
        <end position="387"/>
    </location>
</feature>
<feature type="transmembrane region" description="Helical" evidence="1">
    <location>
        <begin position="388"/>
        <end position="406"/>
    </location>
</feature>
<feature type="topological domain" description="Periplasmic" evidence="1">
    <location>
        <begin position="407"/>
        <end position="412"/>
    </location>
</feature>
<keyword id="KW-0997">Cell inner membrane</keyword>
<keyword id="KW-1003">Cell membrane</keyword>
<keyword id="KW-0406">Ion transport</keyword>
<keyword id="KW-0472">Membrane</keyword>
<keyword id="KW-0769">Symport</keyword>
<keyword id="KW-0812">Transmembrane</keyword>
<keyword id="KW-1133">Transmembrane helix</keyword>
<keyword id="KW-0813">Transport</keyword>
<sequence length="412" mass="44194">MTNYRVESSSGRAARKMRLALMGPAFIAAIGYIDPGNFATNIQAGASFGYQLLWVVVWANLMAMLIQILSAKLGIATGKNLAEQIRDHYPRPVVWFYWVQAEIIAMATDLAEFIGAAIGFKLILGVSLLQGAVLTGIATFLILMLQRRGQKPLEKVIGGLLLFVAAAYIVELIFSQPNLAQLGKGMVIPSLPTSEAVFLAAGVLGATIMPHVIYLHSSLTQHLHGGSRQQRYSATKWDVAIAMTIAGFVNLAMMATAAAAFHFSGHTGVADLDEAYLTLQPLLSHAAATVFGLSLVAAGLSSTVVGTLAGQVVMQGFIRFHIPLWVRRTVTMLPSFIVILMGLDPTRILVMSQVLLSFGIALALVPLLIFTSDSKLMGDLVNSKRVKQTGWVIVVLVVALNIWLLVGTALGL</sequence>
<accession>Q31Y80</accession>
<reference key="1">
    <citation type="journal article" date="2005" name="Nucleic Acids Res.">
        <title>Genome dynamics and diversity of Shigella species, the etiologic agents of bacillary dysentery.</title>
        <authorList>
            <person name="Yang F."/>
            <person name="Yang J."/>
            <person name="Zhang X."/>
            <person name="Chen L."/>
            <person name="Jiang Y."/>
            <person name="Yan Y."/>
            <person name="Tang X."/>
            <person name="Wang J."/>
            <person name="Xiong Z."/>
            <person name="Dong J."/>
            <person name="Xue Y."/>
            <person name="Zhu Y."/>
            <person name="Xu X."/>
            <person name="Sun L."/>
            <person name="Chen S."/>
            <person name="Nie H."/>
            <person name="Peng J."/>
            <person name="Xu J."/>
            <person name="Wang Y."/>
            <person name="Yuan Z."/>
            <person name="Wen Y."/>
            <person name="Yao Z."/>
            <person name="Shen Y."/>
            <person name="Qiang B."/>
            <person name="Hou Y."/>
            <person name="Yu J."/>
            <person name="Jin Q."/>
        </authorList>
    </citation>
    <scope>NUCLEOTIDE SEQUENCE [LARGE SCALE GENOMIC DNA]</scope>
    <source>
        <strain>Sb227</strain>
    </source>
</reference>
<gene>
    <name evidence="1" type="primary">mntH</name>
    <name type="ordered locus">SBO_2417</name>
</gene>
<evidence type="ECO:0000255" key="1">
    <source>
        <dbReference type="HAMAP-Rule" id="MF_00221"/>
    </source>
</evidence>
<organism>
    <name type="scientific">Shigella boydii serotype 4 (strain Sb227)</name>
    <dbReference type="NCBI Taxonomy" id="300268"/>
    <lineage>
        <taxon>Bacteria</taxon>
        <taxon>Pseudomonadati</taxon>
        <taxon>Pseudomonadota</taxon>
        <taxon>Gammaproteobacteria</taxon>
        <taxon>Enterobacterales</taxon>
        <taxon>Enterobacteriaceae</taxon>
        <taxon>Shigella</taxon>
    </lineage>
</organism>
<dbReference type="EMBL" id="CP000036">
    <property type="protein sequence ID" value="ABB66978.1"/>
    <property type="molecule type" value="Genomic_DNA"/>
</dbReference>
<dbReference type="RefSeq" id="WP_000186369.1">
    <property type="nucleotide sequence ID" value="NC_007613.1"/>
</dbReference>
<dbReference type="SMR" id="Q31Y80"/>
<dbReference type="KEGG" id="sbo:SBO_2417"/>
<dbReference type="HOGENOM" id="CLU_020088_2_0_6"/>
<dbReference type="Proteomes" id="UP000007067">
    <property type="component" value="Chromosome"/>
</dbReference>
<dbReference type="GO" id="GO:0005886">
    <property type="term" value="C:plasma membrane"/>
    <property type="evidence" value="ECO:0007669"/>
    <property type="project" value="UniProtKB-SubCell"/>
</dbReference>
<dbReference type="GO" id="GO:0015086">
    <property type="term" value="F:cadmium ion transmembrane transporter activity"/>
    <property type="evidence" value="ECO:0007669"/>
    <property type="project" value="TreeGrafter"/>
</dbReference>
<dbReference type="GO" id="GO:0005384">
    <property type="term" value="F:manganese ion transmembrane transporter activity"/>
    <property type="evidence" value="ECO:0007669"/>
    <property type="project" value="TreeGrafter"/>
</dbReference>
<dbReference type="GO" id="GO:0046872">
    <property type="term" value="F:metal ion binding"/>
    <property type="evidence" value="ECO:0007669"/>
    <property type="project" value="UniProtKB-UniRule"/>
</dbReference>
<dbReference type="GO" id="GO:0015293">
    <property type="term" value="F:symporter activity"/>
    <property type="evidence" value="ECO:0007669"/>
    <property type="project" value="UniProtKB-UniRule"/>
</dbReference>
<dbReference type="GO" id="GO:0034755">
    <property type="term" value="P:iron ion transmembrane transport"/>
    <property type="evidence" value="ECO:0007669"/>
    <property type="project" value="TreeGrafter"/>
</dbReference>
<dbReference type="HAMAP" id="MF_00221">
    <property type="entry name" value="NRAMP"/>
    <property type="match status" value="1"/>
</dbReference>
<dbReference type="InterPro" id="IPR001046">
    <property type="entry name" value="NRAMP_fam"/>
</dbReference>
<dbReference type="NCBIfam" id="TIGR01197">
    <property type="entry name" value="nramp"/>
    <property type="match status" value="1"/>
</dbReference>
<dbReference type="NCBIfam" id="NF037982">
    <property type="entry name" value="Nramp_1"/>
    <property type="match status" value="1"/>
</dbReference>
<dbReference type="NCBIfam" id="NF001923">
    <property type="entry name" value="PRK00701.1"/>
    <property type="match status" value="1"/>
</dbReference>
<dbReference type="PANTHER" id="PTHR11706:SF33">
    <property type="entry name" value="NATURAL RESISTANCE-ASSOCIATED MACROPHAGE PROTEIN 2"/>
    <property type="match status" value="1"/>
</dbReference>
<dbReference type="PANTHER" id="PTHR11706">
    <property type="entry name" value="SOLUTE CARRIER PROTEIN FAMILY 11 MEMBER"/>
    <property type="match status" value="1"/>
</dbReference>
<dbReference type="Pfam" id="PF01566">
    <property type="entry name" value="Nramp"/>
    <property type="match status" value="1"/>
</dbReference>
<dbReference type="PRINTS" id="PR00447">
    <property type="entry name" value="NATRESASSCMP"/>
</dbReference>